<name>RRF_MYCTU</name>
<protein>
    <recommendedName>
        <fullName evidence="1">Ribosome-recycling factor</fullName>
        <shortName evidence="1">RRF</shortName>
    </recommendedName>
    <alternativeName>
        <fullName evidence="1">Ribosome-releasing factor</fullName>
    </alternativeName>
</protein>
<reference key="1">
    <citation type="journal article" date="1998" name="Nature">
        <title>Deciphering the biology of Mycobacterium tuberculosis from the complete genome sequence.</title>
        <authorList>
            <person name="Cole S.T."/>
            <person name="Brosch R."/>
            <person name="Parkhill J."/>
            <person name="Garnier T."/>
            <person name="Churcher C.M."/>
            <person name="Harris D.E."/>
            <person name="Gordon S.V."/>
            <person name="Eiglmeier K."/>
            <person name="Gas S."/>
            <person name="Barry C.E. III"/>
            <person name="Tekaia F."/>
            <person name="Badcock K."/>
            <person name="Basham D."/>
            <person name="Brown D."/>
            <person name="Chillingworth T."/>
            <person name="Connor R."/>
            <person name="Davies R.M."/>
            <person name="Devlin K."/>
            <person name="Feltwell T."/>
            <person name="Gentles S."/>
            <person name="Hamlin N."/>
            <person name="Holroyd S."/>
            <person name="Hornsby T."/>
            <person name="Jagels K."/>
            <person name="Krogh A."/>
            <person name="McLean J."/>
            <person name="Moule S."/>
            <person name="Murphy L.D."/>
            <person name="Oliver S."/>
            <person name="Osborne J."/>
            <person name="Quail M.A."/>
            <person name="Rajandream M.A."/>
            <person name="Rogers J."/>
            <person name="Rutter S."/>
            <person name="Seeger K."/>
            <person name="Skelton S."/>
            <person name="Squares S."/>
            <person name="Squares R."/>
            <person name="Sulston J.E."/>
            <person name="Taylor K."/>
            <person name="Whitehead S."/>
            <person name="Barrell B.G."/>
        </authorList>
    </citation>
    <scope>NUCLEOTIDE SEQUENCE [LARGE SCALE GENOMIC DNA]</scope>
    <source>
        <strain>ATCC 25618 / H37Rv</strain>
    </source>
</reference>
<reference key="2">
    <citation type="journal article" date="2011" name="Mol. Cell. Proteomics">
        <title>Proteogenomic analysis of Mycobacterium tuberculosis by high resolution mass spectrometry.</title>
        <authorList>
            <person name="Kelkar D.S."/>
            <person name="Kumar D."/>
            <person name="Kumar P."/>
            <person name="Balakrishnan L."/>
            <person name="Muthusamy B."/>
            <person name="Yadav A.K."/>
            <person name="Shrivastava P."/>
            <person name="Marimuthu A."/>
            <person name="Anand S."/>
            <person name="Sundaram H."/>
            <person name="Kingsbury R."/>
            <person name="Harsha H.C."/>
            <person name="Nair B."/>
            <person name="Prasad T.S."/>
            <person name="Chauhan D.S."/>
            <person name="Katoch K."/>
            <person name="Katoch V.M."/>
            <person name="Kumar P."/>
            <person name="Chaerkady R."/>
            <person name="Ramachandran S."/>
            <person name="Dash D."/>
            <person name="Pandey A."/>
        </authorList>
    </citation>
    <scope>IDENTIFICATION BY MASS SPECTROMETRY [LARGE SCALE ANALYSIS]</scope>
    <source>
        <strain>ATCC 25618 / H37Rv</strain>
    </source>
</reference>
<comment type="function">
    <text evidence="1">Responsible for the release of ribosomes from messenger RNA at the termination of protein biosynthesis. May increase the efficiency of translation by recycling ribosomes from one round of translation to another.</text>
</comment>
<comment type="subcellular location">
    <subcellularLocation>
        <location evidence="1">Cytoplasm</location>
    </subcellularLocation>
</comment>
<comment type="similarity">
    <text evidence="1">Belongs to the RRF family.</text>
</comment>
<feature type="chain" id="PRO_0000167500" description="Ribosome-recycling factor">
    <location>
        <begin position="1"/>
        <end position="185"/>
    </location>
</feature>
<feature type="region of interest" description="Disordered" evidence="2">
    <location>
        <begin position="144"/>
        <end position="164"/>
    </location>
</feature>
<feature type="helix" evidence="5">
    <location>
        <begin position="2"/>
        <end position="24"/>
    </location>
</feature>
<feature type="strand" evidence="4">
    <location>
        <begin position="29"/>
        <end position="31"/>
    </location>
</feature>
<feature type="helix" evidence="5">
    <location>
        <begin position="34"/>
        <end position="37"/>
    </location>
</feature>
<feature type="strand" evidence="5">
    <location>
        <begin position="41"/>
        <end position="43"/>
    </location>
</feature>
<feature type="strand" evidence="5">
    <location>
        <begin position="45"/>
        <end position="50"/>
    </location>
</feature>
<feature type="helix" evidence="5">
    <location>
        <begin position="51"/>
        <end position="53"/>
    </location>
</feature>
<feature type="strand" evidence="5">
    <location>
        <begin position="54"/>
        <end position="61"/>
    </location>
</feature>
<feature type="strand" evidence="5">
    <location>
        <begin position="64"/>
        <end position="71"/>
    </location>
</feature>
<feature type="helix" evidence="5">
    <location>
        <begin position="72"/>
        <end position="74"/>
    </location>
</feature>
<feature type="helix" evidence="5">
    <location>
        <begin position="75"/>
        <end position="84"/>
    </location>
</feature>
<feature type="strand" evidence="3">
    <location>
        <begin position="85"/>
        <end position="87"/>
    </location>
</feature>
<feature type="strand" evidence="4">
    <location>
        <begin position="92"/>
        <end position="96"/>
    </location>
</feature>
<feature type="strand" evidence="5">
    <location>
        <begin position="98"/>
        <end position="101"/>
    </location>
</feature>
<feature type="helix" evidence="5">
    <location>
        <begin position="107"/>
        <end position="144"/>
    </location>
</feature>
<feature type="helix" evidence="5">
    <location>
        <begin position="150"/>
        <end position="182"/>
    </location>
</feature>
<accession>P9WGY1</accession>
<accession>L0TCI6</accession>
<accession>P66734</accession>
<accession>Q10794</accession>
<gene>
    <name evidence="1" type="primary">frr</name>
    <name type="ordered locus">Rv2882c</name>
    <name type="ORF">MTCY274.13c</name>
</gene>
<proteinExistence type="evidence at protein level"/>
<dbReference type="EMBL" id="AL123456">
    <property type="protein sequence ID" value="CCP45684.1"/>
    <property type="molecule type" value="Genomic_DNA"/>
</dbReference>
<dbReference type="PIR" id="E70924">
    <property type="entry name" value="E70924"/>
</dbReference>
<dbReference type="RefSeq" id="NP_217398.1">
    <property type="nucleotide sequence ID" value="NC_000962.3"/>
</dbReference>
<dbReference type="RefSeq" id="WP_003414663.1">
    <property type="nucleotide sequence ID" value="NZ_NVQJ01000006.1"/>
</dbReference>
<dbReference type="PDB" id="1WQF">
    <property type="method" value="X-ray"/>
    <property type="resolution" value="2.65 A"/>
    <property type="chains" value="A=1-185"/>
</dbReference>
<dbReference type="PDB" id="1WQG">
    <property type="method" value="X-ray"/>
    <property type="resolution" value="2.15 A"/>
    <property type="chains" value="A=1-185"/>
</dbReference>
<dbReference type="PDB" id="1WQH">
    <property type="method" value="X-ray"/>
    <property type="resolution" value="2.90 A"/>
    <property type="chains" value="A=1-185"/>
</dbReference>
<dbReference type="PDB" id="4KAW">
    <property type="method" value="X-ray"/>
    <property type="resolution" value="2.50 A"/>
    <property type="chains" value="X=1-185"/>
</dbReference>
<dbReference type="PDB" id="4KB2">
    <property type="method" value="X-ray"/>
    <property type="resolution" value="2.30 A"/>
    <property type="chains" value="A=1-185"/>
</dbReference>
<dbReference type="PDB" id="4KB4">
    <property type="method" value="X-ray"/>
    <property type="resolution" value="2.25 A"/>
    <property type="chains" value="A=1-185"/>
</dbReference>
<dbReference type="PDB" id="4KC6">
    <property type="method" value="X-ray"/>
    <property type="resolution" value="2.40 A"/>
    <property type="chains" value="A=1-179"/>
</dbReference>
<dbReference type="PDB" id="4KDD">
    <property type="method" value="X-ray"/>
    <property type="resolution" value="1.90 A"/>
    <property type="chains" value="A=1-185"/>
</dbReference>
<dbReference type="PDBsum" id="1WQF"/>
<dbReference type="PDBsum" id="1WQG"/>
<dbReference type="PDBsum" id="1WQH"/>
<dbReference type="PDBsum" id="4KAW"/>
<dbReference type="PDBsum" id="4KB2"/>
<dbReference type="PDBsum" id="4KB4"/>
<dbReference type="PDBsum" id="4KC6"/>
<dbReference type="PDBsum" id="4KDD"/>
<dbReference type="SMR" id="P9WGY1"/>
<dbReference type="FunCoup" id="P9WGY1">
    <property type="interactions" value="290"/>
</dbReference>
<dbReference type="STRING" id="83332.Rv2882c"/>
<dbReference type="PaxDb" id="83332-Rv2882c"/>
<dbReference type="DNASU" id="887464"/>
<dbReference type="GeneID" id="45426870"/>
<dbReference type="GeneID" id="887464"/>
<dbReference type="KEGG" id="mtu:Rv2882c"/>
<dbReference type="KEGG" id="mtv:RVBD_2882c"/>
<dbReference type="TubercuList" id="Rv2882c"/>
<dbReference type="eggNOG" id="COG0233">
    <property type="taxonomic scope" value="Bacteria"/>
</dbReference>
<dbReference type="InParanoid" id="P9WGY1"/>
<dbReference type="OrthoDB" id="9804006at2"/>
<dbReference type="PhylomeDB" id="P9WGY1"/>
<dbReference type="EvolutionaryTrace" id="P9WGY1"/>
<dbReference type="Proteomes" id="UP000001584">
    <property type="component" value="Chromosome"/>
</dbReference>
<dbReference type="GO" id="GO:0005737">
    <property type="term" value="C:cytoplasm"/>
    <property type="evidence" value="ECO:0007669"/>
    <property type="project" value="UniProtKB-SubCell"/>
</dbReference>
<dbReference type="GO" id="GO:0009274">
    <property type="term" value="C:peptidoglycan-based cell wall"/>
    <property type="evidence" value="ECO:0007005"/>
    <property type="project" value="MTBBASE"/>
</dbReference>
<dbReference type="GO" id="GO:0005886">
    <property type="term" value="C:plasma membrane"/>
    <property type="evidence" value="ECO:0007005"/>
    <property type="project" value="MTBBASE"/>
</dbReference>
<dbReference type="GO" id="GO:0043023">
    <property type="term" value="F:ribosomal large subunit binding"/>
    <property type="evidence" value="ECO:0000318"/>
    <property type="project" value="GO_Central"/>
</dbReference>
<dbReference type="GO" id="GO:0008079">
    <property type="term" value="F:translation termination factor activity"/>
    <property type="evidence" value="ECO:0000314"/>
    <property type="project" value="MTBBASE"/>
</dbReference>
<dbReference type="GO" id="GO:0006412">
    <property type="term" value="P:translation"/>
    <property type="evidence" value="ECO:0000318"/>
    <property type="project" value="GO_Central"/>
</dbReference>
<dbReference type="GO" id="GO:0006415">
    <property type="term" value="P:translational termination"/>
    <property type="evidence" value="ECO:0000314"/>
    <property type="project" value="MTBBASE"/>
</dbReference>
<dbReference type="CDD" id="cd00520">
    <property type="entry name" value="RRF"/>
    <property type="match status" value="1"/>
</dbReference>
<dbReference type="FunFam" id="1.10.132.20:FF:000001">
    <property type="entry name" value="Ribosome-recycling factor"/>
    <property type="match status" value="1"/>
</dbReference>
<dbReference type="FunFam" id="3.30.1360.40:FF:000001">
    <property type="entry name" value="Ribosome-recycling factor"/>
    <property type="match status" value="1"/>
</dbReference>
<dbReference type="Gene3D" id="3.30.1360.40">
    <property type="match status" value="1"/>
</dbReference>
<dbReference type="Gene3D" id="1.10.132.20">
    <property type="entry name" value="Ribosome-recycling factor"/>
    <property type="match status" value="1"/>
</dbReference>
<dbReference type="HAMAP" id="MF_00040">
    <property type="entry name" value="RRF"/>
    <property type="match status" value="1"/>
</dbReference>
<dbReference type="InterPro" id="IPR002661">
    <property type="entry name" value="Ribosome_recyc_fac"/>
</dbReference>
<dbReference type="InterPro" id="IPR023584">
    <property type="entry name" value="Ribosome_recyc_fac_dom"/>
</dbReference>
<dbReference type="InterPro" id="IPR036191">
    <property type="entry name" value="RRF_sf"/>
</dbReference>
<dbReference type="NCBIfam" id="TIGR00496">
    <property type="entry name" value="frr"/>
    <property type="match status" value="1"/>
</dbReference>
<dbReference type="PANTHER" id="PTHR20982:SF3">
    <property type="entry name" value="MITOCHONDRIAL RIBOSOME RECYCLING FACTOR PSEUDO 1"/>
    <property type="match status" value="1"/>
</dbReference>
<dbReference type="PANTHER" id="PTHR20982">
    <property type="entry name" value="RIBOSOME RECYCLING FACTOR"/>
    <property type="match status" value="1"/>
</dbReference>
<dbReference type="Pfam" id="PF01765">
    <property type="entry name" value="RRF"/>
    <property type="match status" value="1"/>
</dbReference>
<dbReference type="SUPFAM" id="SSF55194">
    <property type="entry name" value="Ribosome recycling factor, RRF"/>
    <property type="match status" value="1"/>
</dbReference>
<sequence length="185" mass="20828">MIDEALFDAEEKMEKAVAVARDDLSTIRTGRANPGMFSRITIDYYGAATPITQLASINVPEARLVVIKPYEANQLRAIETAIRNSDLGVNPTNDGALIRVAVPQLTEERRRELVKQAKHKGEEAKVSVRNIRRKAMEELHRIRKEGEAGEDEVGRAEKDLDKTTHQYVTQIDELVKHKEGELLEV</sequence>
<organism>
    <name type="scientific">Mycobacterium tuberculosis (strain ATCC 25618 / H37Rv)</name>
    <dbReference type="NCBI Taxonomy" id="83332"/>
    <lineage>
        <taxon>Bacteria</taxon>
        <taxon>Bacillati</taxon>
        <taxon>Actinomycetota</taxon>
        <taxon>Actinomycetes</taxon>
        <taxon>Mycobacteriales</taxon>
        <taxon>Mycobacteriaceae</taxon>
        <taxon>Mycobacterium</taxon>
        <taxon>Mycobacterium tuberculosis complex</taxon>
    </lineage>
</organism>
<keyword id="KW-0002">3D-structure</keyword>
<keyword id="KW-0963">Cytoplasm</keyword>
<keyword id="KW-0648">Protein biosynthesis</keyword>
<keyword id="KW-1185">Reference proteome</keyword>
<evidence type="ECO:0000255" key="1">
    <source>
        <dbReference type="HAMAP-Rule" id="MF_00040"/>
    </source>
</evidence>
<evidence type="ECO:0000256" key="2">
    <source>
        <dbReference type="SAM" id="MobiDB-lite"/>
    </source>
</evidence>
<evidence type="ECO:0007829" key="3">
    <source>
        <dbReference type="PDB" id="4KB2"/>
    </source>
</evidence>
<evidence type="ECO:0007829" key="4">
    <source>
        <dbReference type="PDB" id="4KB4"/>
    </source>
</evidence>
<evidence type="ECO:0007829" key="5">
    <source>
        <dbReference type="PDB" id="4KDD"/>
    </source>
</evidence>